<reference key="1">
    <citation type="journal article" date="2009" name="Proc. Natl. Acad. Sci. U.S.A.">
        <title>The genomic basis of trophic strategy in marine bacteria.</title>
        <authorList>
            <person name="Lauro F.M."/>
            <person name="McDougald D."/>
            <person name="Thomas T."/>
            <person name="Williams T.J."/>
            <person name="Egan S."/>
            <person name="Rice S."/>
            <person name="DeMaere M.Z."/>
            <person name="Ting L."/>
            <person name="Ertan H."/>
            <person name="Johnson J."/>
            <person name="Ferriera S."/>
            <person name="Lapidus A."/>
            <person name="Anderson I."/>
            <person name="Kyrpides N."/>
            <person name="Munk A.C."/>
            <person name="Detter C."/>
            <person name="Han C.S."/>
            <person name="Brown M.V."/>
            <person name="Robb F.T."/>
            <person name="Kjelleberg S."/>
            <person name="Cavicchioli R."/>
        </authorList>
    </citation>
    <scope>NUCLEOTIDE SEQUENCE [LARGE SCALE GENOMIC DNA]</scope>
    <source>
        <strain>DSM 13593 / LMG 18877 / RB2256</strain>
    </source>
</reference>
<feature type="chain" id="PRO_1000024067" description="Dihydroorotase">
    <location>
        <begin position="1"/>
        <end position="340"/>
    </location>
</feature>
<feature type="active site" evidence="1">
    <location>
        <position position="248"/>
    </location>
</feature>
<feature type="binding site" evidence="1">
    <location>
        <position position="14"/>
    </location>
    <ligand>
        <name>Zn(2+)</name>
        <dbReference type="ChEBI" id="CHEBI:29105"/>
        <label>1</label>
    </ligand>
</feature>
<feature type="binding site" evidence="1">
    <location>
        <begin position="16"/>
        <end position="18"/>
    </location>
    <ligand>
        <name>substrate</name>
    </ligand>
</feature>
<feature type="binding site" evidence="1">
    <location>
        <position position="16"/>
    </location>
    <ligand>
        <name>Zn(2+)</name>
        <dbReference type="ChEBI" id="CHEBI:29105"/>
        <label>1</label>
    </ligand>
</feature>
<feature type="binding site" evidence="1">
    <location>
        <position position="42"/>
    </location>
    <ligand>
        <name>substrate</name>
    </ligand>
</feature>
<feature type="binding site" description="via carbamate group" evidence="1">
    <location>
        <position position="100"/>
    </location>
    <ligand>
        <name>Zn(2+)</name>
        <dbReference type="ChEBI" id="CHEBI:29105"/>
        <label>1</label>
    </ligand>
</feature>
<feature type="binding site" description="via carbamate group" evidence="1">
    <location>
        <position position="100"/>
    </location>
    <ligand>
        <name>Zn(2+)</name>
        <dbReference type="ChEBI" id="CHEBI:29105"/>
        <label>2</label>
    </ligand>
</feature>
<feature type="binding site" evidence="1">
    <location>
        <position position="137"/>
    </location>
    <ligand>
        <name>substrate</name>
    </ligand>
</feature>
<feature type="binding site" evidence="1">
    <location>
        <position position="137"/>
    </location>
    <ligand>
        <name>Zn(2+)</name>
        <dbReference type="ChEBI" id="CHEBI:29105"/>
        <label>2</label>
    </ligand>
</feature>
<feature type="binding site" evidence="1">
    <location>
        <position position="175"/>
    </location>
    <ligand>
        <name>Zn(2+)</name>
        <dbReference type="ChEBI" id="CHEBI:29105"/>
        <label>2</label>
    </ligand>
</feature>
<feature type="binding site" evidence="1">
    <location>
        <position position="220"/>
    </location>
    <ligand>
        <name>substrate</name>
    </ligand>
</feature>
<feature type="binding site" evidence="1">
    <location>
        <position position="248"/>
    </location>
    <ligand>
        <name>Zn(2+)</name>
        <dbReference type="ChEBI" id="CHEBI:29105"/>
        <label>1</label>
    </ligand>
</feature>
<feature type="binding site" evidence="1">
    <location>
        <position position="252"/>
    </location>
    <ligand>
        <name>substrate</name>
    </ligand>
</feature>
<feature type="binding site" evidence="1">
    <location>
        <position position="264"/>
    </location>
    <ligand>
        <name>substrate</name>
    </ligand>
</feature>
<feature type="modified residue" description="N6-carboxylysine" evidence="1">
    <location>
        <position position="100"/>
    </location>
</feature>
<comment type="function">
    <text evidence="1">Catalyzes the reversible cyclization of carbamoyl aspartate to dihydroorotate.</text>
</comment>
<comment type="catalytic activity">
    <reaction evidence="1">
        <text>(S)-dihydroorotate + H2O = N-carbamoyl-L-aspartate + H(+)</text>
        <dbReference type="Rhea" id="RHEA:24296"/>
        <dbReference type="ChEBI" id="CHEBI:15377"/>
        <dbReference type="ChEBI" id="CHEBI:15378"/>
        <dbReference type="ChEBI" id="CHEBI:30864"/>
        <dbReference type="ChEBI" id="CHEBI:32814"/>
        <dbReference type="EC" id="3.5.2.3"/>
    </reaction>
</comment>
<comment type="cofactor">
    <cofactor evidence="1">
        <name>Zn(2+)</name>
        <dbReference type="ChEBI" id="CHEBI:29105"/>
    </cofactor>
    <text evidence="1">Binds 2 Zn(2+) ions per subunit.</text>
</comment>
<comment type="pathway">
    <text evidence="1">Pyrimidine metabolism; UMP biosynthesis via de novo pathway; (S)-dihydroorotate from bicarbonate: step 3/3.</text>
</comment>
<comment type="subunit">
    <text evidence="1">Homodimer.</text>
</comment>
<comment type="similarity">
    <text evidence="1">Belongs to the metallo-dependent hydrolases superfamily. DHOase family. Class II DHOase subfamily.</text>
</comment>
<keyword id="KW-0378">Hydrolase</keyword>
<keyword id="KW-0479">Metal-binding</keyword>
<keyword id="KW-0665">Pyrimidine biosynthesis</keyword>
<keyword id="KW-1185">Reference proteome</keyword>
<keyword id="KW-0862">Zinc</keyword>
<protein>
    <recommendedName>
        <fullName evidence="1">Dihydroorotase</fullName>
        <shortName evidence="1">DHOase</shortName>
        <ecNumber evidence="1">3.5.2.3</ecNumber>
    </recommendedName>
</protein>
<accession>Q1GT81</accession>
<name>PYRC_SPHAL</name>
<dbReference type="EC" id="3.5.2.3" evidence="1"/>
<dbReference type="EMBL" id="CP000356">
    <property type="protein sequence ID" value="ABF53141.1"/>
    <property type="molecule type" value="Genomic_DNA"/>
</dbReference>
<dbReference type="RefSeq" id="WP_011541721.1">
    <property type="nucleotide sequence ID" value="NC_008048.1"/>
</dbReference>
<dbReference type="SMR" id="Q1GT81"/>
<dbReference type="STRING" id="317655.Sala_1427"/>
<dbReference type="KEGG" id="sal:Sala_1427"/>
<dbReference type="eggNOG" id="COG0418">
    <property type="taxonomic scope" value="Bacteria"/>
</dbReference>
<dbReference type="HOGENOM" id="CLU_041558_1_0_5"/>
<dbReference type="OrthoDB" id="9808095at2"/>
<dbReference type="UniPathway" id="UPA00070">
    <property type="reaction ID" value="UER00117"/>
</dbReference>
<dbReference type="Proteomes" id="UP000006578">
    <property type="component" value="Chromosome"/>
</dbReference>
<dbReference type="GO" id="GO:0005829">
    <property type="term" value="C:cytosol"/>
    <property type="evidence" value="ECO:0007669"/>
    <property type="project" value="TreeGrafter"/>
</dbReference>
<dbReference type="GO" id="GO:0004151">
    <property type="term" value="F:dihydroorotase activity"/>
    <property type="evidence" value="ECO:0007669"/>
    <property type="project" value="UniProtKB-UniRule"/>
</dbReference>
<dbReference type="GO" id="GO:0008270">
    <property type="term" value="F:zinc ion binding"/>
    <property type="evidence" value="ECO:0007669"/>
    <property type="project" value="UniProtKB-UniRule"/>
</dbReference>
<dbReference type="GO" id="GO:0006207">
    <property type="term" value="P:'de novo' pyrimidine nucleobase biosynthetic process"/>
    <property type="evidence" value="ECO:0007669"/>
    <property type="project" value="TreeGrafter"/>
</dbReference>
<dbReference type="GO" id="GO:0044205">
    <property type="term" value="P:'de novo' UMP biosynthetic process"/>
    <property type="evidence" value="ECO:0007669"/>
    <property type="project" value="UniProtKB-UniRule"/>
</dbReference>
<dbReference type="CDD" id="cd01294">
    <property type="entry name" value="DHOase"/>
    <property type="match status" value="1"/>
</dbReference>
<dbReference type="FunFam" id="3.20.20.140:FF:000006">
    <property type="entry name" value="Dihydroorotase"/>
    <property type="match status" value="1"/>
</dbReference>
<dbReference type="Gene3D" id="3.20.20.140">
    <property type="entry name" value="Metal-dependent hydrolases"/>
    <property type="match status" value="1"/>
</dbReference>
<dbReference type="HAMAP" id="MF_00219">
    <property type="entry name" value="PyrC_classII"/>
    <property type="match status" value="1"/>
</dbReference>
<dbReference type="InterPro" id="IPR006680">
    <property type="entry name" value="Amidohydro-rel"/>
</dbReference>
<dbReference type="InterPro" id="IPR004721">
    <property type="entry name" value="DHOdimr"/>
</dbReference>
<dbReference type="InterPro" id="IPR002195">
    <property type="entry name" value="Dihydroorotase_CS"/>
</dbReference>
<dbReference type="InterPro" id="IPR032466">
    <property type="entry name" value="Metal_Hydrolase"/>
</dbReference>
<dbReference type="NCBIfam" id="TIGR00856">
    <property type="entry name" value="pyrC_dimer"/>
    <property type="match status" value="1"/>
</dbReference>
<dbReference type="PANTHER" id="PTHR43137">
    <property type="entry name" value="DIHYDROOROTASE"/>
    <property type="match status" value="1"/>
</dbReference>
<dbReference type="PANTHER" id="PTHR43137:SF1">
    <property type="entry name" value="DIHYDROOROTASE"/>
    <property type="match status" value="1"/>
</dbReference>
<dbReference type="Pfam" id="PF01979">
    <property type="entry name" value="Amidohydro_1"/>
    <property type="match status" value="1"/>
</dbReference>
<dbReference type="PIRSF" id="PIRSF001237">
    <property type="entry name" value="DHOdimr"/>
    <property type="match status" value="1"/>
</dbReference>
<dbReference type="SUPFAM" id="SSF51556">
    <property type="entry name" value="Metallo-dependent hydrolases"/>
    <property type="match status" value="1"/>
</dbReference>
<dbReference type="PROSITE" id="PS00482">
    <property type="entry name" value="DIHYDROOROTASE_1"/>
    <property type="match status" value="1"/>
</dbReference>
<dbReference type="PROSITE" id="PS00483">
    <property type="entry name" value="DIHYDROOROTASE_2"/>
    <property type="match status" value="1"/>
</dbReference>
<sequence length="340" mass="36843">MTDRLTIRRPDDWHVHLRDGAMLAHVAPYTARQFARAIVMPNLSPPVTTAEEGRAYRDRITAAVPADLDFTPLIVAYLTDATDADEIARGHAEGVFTAAKLYPAHATTGSAHGVTDVANIMGVLERMQDIGMPLLIHGEVTDHDVDIFDREAVFIERTLEPLVRALPGLKIVFEHITTAEAAQFVADAPANVAATITPQHLHINRNAMLVGGIRPHAYCLPVAKREHHRLAVRAAATSGSPKFFLGTDSAPHAVHMKEASCGCAGIFNAPFALESYAMAFDQDGALANFEGFASEHGPRFYGLPLNEGTVTLERAEITVPDRIGDVVPFHAGETIGWRLV</sequence>
<evidence type="ECO:0000255" key="1">
    <source>
        <dbReference type="HAMAP-Rule" id="MF_00219"/>
    </source>
</evidence>
<gene>
    <name evidence="1" type="primary">pyrC</name>
    <name type="ordered locus">Sala_1427</name>
</gene>
<organism>
    <name type="scientific">Sphingopyxis alaskensis (strain DSM 13593 / LMG 18877 / RB2256)</name>
    <name type="common">Sphingomonas alaskensis</name>
    <dbReference type="NCBI Taxonomy" id="317655"/>
    <lineage>
        <taxon>Bacteria</taxon>
        <taxon>Pseudomonadati</taxon>
        <taxon>Pseudomonadota</taxon>
        <taxon>Alphaproteobacteria</taxon>
        <taxon>Sphingomonadales</taxon>
        <taxon>Sphingomonadaceae</taxon>
        <taxon>Sphingopyxis</taxon>
    </lineage>
</organism>
<proteinExistence type="inferred from homology"/>